<keyword id="KW-0414">Isoprene biosynthesis</keyword>
<keyword id="KW-0460">Magnesium</keyword>
<keyword id="KW-0472">Membrane</keyword>
<keyword id="KW-0479">Metal-binding</keyword>
<keyword id="KW-0496">Mitochondrion</keyword>
<keyword id="KW-0999">Mitochondrion inner membrane</keyword>
<keyword id="KW-1185">Reference proteome</keyword>
<keyword id="KW-0808">Transferase</keyword>
<keyword id="KW-0809">Transit peptide</keyword>
<name>COQ1_YEAST</name>
<proteinExistence type="evidence at protein level"/>
<organism>
    <name type="scientific">Saccharomyces cerevisiae (strain ATCC 204508 / S288c)</name>
    <name type="common">Baker's yeast</name>
    <dbReference type="NCBI Taxonomy" id="559292"/>
    <lineage>
        <taxon>Eukaryota</taxon>
        <taxon>Fungi</taxon>
        <taxon>Dikarya</taxon>
        <taxon>Ascomycota</taxon>
        <taxon>Saccharomycotina</taxon>
        <taxon>Saccharomycetes</taxon>
        <taxon>Saccharomycetales</taxon>
        <taxon>Saccharomycetaceae</taxon>
        <taxon>Saccharomyces</taxon>
    </lineage>
</organism>
<evidence type="ECO:0000250" key="1"/>
<evidence type="ECO:0000250" key="2">
    <source>
        <dbReference type="UniProtKB" id="P14324"/>
    </source>
</evidence>
<evidence type="ECO:0000250" key="3">
    <source>
        <dbReference type="UniProtKB" id="Q12051"/>
    </source>
</evidence>
<evidence type="ECO:0000255" key="4"/>
<evidence type="ECO:0000269" key="5">
    <source>
    </source>
</evidence>
<evidence type="ECO:0000305" key="6"/>
<protein>
    <recommendedName>
        <fullName>Hexaprenyl pyrophosphate synthase, mitochondrial</fullName>
        <shortName>HPS</shortName>
        <ecNumber>2.5.1.-</ecNumber>
    </recommendedName>
</protein>
<accession>P18900</accession>
<accession>D6VQ04</accession>
<feature type="transit peptide" description="Mitochondrion" evidence="4">
    <location>
        <begin position="1"/>
        <end status="unknown"/>
    </location>
</feature>
<feature type="chain" id="PRO_0000016477" description="Hexaprenyl pyrophosphate synthase, mitochondrial">
    <location>
        <begin status="unknown"/>
        <end position="473"/>
    </location>
</feature>
<feature type="binding site" evidence="2">
    <location>
        <position position="84"/>
    </location>
    <ligand>
        <name>isopentenyl diphosphate</name>
        <dbReference type="ChEBI" id="CHEBI:128769"/>
    </ligand>
</feature>
<feature type="binding site" evidence="2">
    <location>
        <position position="87"/>
    </location>
    <ligand>
        <name>isopentenyl diphosphate</name>
        <dbReference type="ChEBI" id="CHEBI:128769"/>
    </ligand>
</feature>
<feature type="binding site" evidence="3">
    <location>
        <position position="186"/>
    </location>
    <ligand>
        <name>isopentenyl diphosphate</name>
        <dbReference type="ChEBI" id="CHEBI:128769"/>
    </ligand>
</feature>
<feature type="binding site" evidence="2">
    <location>
        <position position="193"/>
    </location>
    <ligand>
        <name>Mg(2+)</name>
        <dbReference type="ChEBI" id="CHEBI:18420"/>
        <label>1</label>
    </ligand>
</feature>
<feature type="binding site" evidence="2">
    <location>
        <position position="193"/>
    </location>
    <ligand>
        <name>Mg(2+)</name>
        <dbReference type="ChEBI" id="CHEBI:18420"/>
        <label>2</label>
    </ligand>
</feature>
<feature type="binding site" evidence="2">
    <location>
        <position position="197"/>
    </location>
    <ligand>
        <name>Mg(2+)</name>
        <dbReference type="ChEBI" id="CHEBI:18420"/>
        <label>1</label>
    </ligand>
</feature>
<feature type="binding site" evidence="2">
    <location>
        <position position="197"/>
    </location>
    <ligand>
        <name>Mg(2+)</name>
        <dbReference type="ChEBI" id="CHEBI:18420"/>
        <label>2</label>
    </ligand>
</feature>
<feature type="binding site" evidence="1">
    <location>
        <position position="202"/>
    </location>
    <ligand>
        <name>an all-trans-polyprenyl diphosphate</name>
        <dbReference type="ChEBI" id="CHEBI:58914"/>
    </ligand>
</feature>
<feature type="binding site" evidence="2">
    <location>
        <position position="203"/>
    </location>
    <ligand>
        <name>isopentenyl diphosphate</name>
        <dbReference type="ChEBI" id="CHEBI:128769"/>
    </ligand>
</feature>
<feature type="binding site" evidence="1">
    <location>
        <position position="323"/>
    </location>
    <ligand>
        <name>an all-trans-polyprenyl diphosphate</name>
        <dbReference type="ChEBI" id="CHEBI:58914"/>
    </ligand>
</feature>
<feature type="binding site" evidence="1">
    <location>
        <position position="324"/>
    </location>
    <ligand>
        <name>an all-trans-polyprenyl diphosphate</name>
        <dbReference type="ChEBI" id="CHEBI:58914"/>
    </ligand>
</feature>
<feature type="binding site" evidence="1">
    <location>
        <position position="361"/>
    </location>
    <ligand>
        <name>an all-trans-polyprenyl diphosphate</name>
        <dbReference type="ChEBI" id="CHEBI:58914"/>
    </ligand>
</feature>
<feature type="binding site" evidence="1">
    <location>
        <position position="378"/>
    </location>
    <ligand>
        <name>an all-trans-polyprenyl diphosphate</name>
        <dbReference type="ChEBI" id="CHEBI:58914"/>
    </ligand>
</feature>
<reference key="1">
    <citation type="journal article" date="1990" name="J. Biol. Chem.">
        <title>Elucidation of the deficiency in two yeast coenzyme Q mutants. Characterization of the structural gene encoding hexaprenyl pyrophosphate synthetase.</title>
        <authorList>
            <person name="Ashby M.N."/>
            <person name="Edwards P.A."/>
        </authorList>
    </citation>
    <scope>NUCLEOTIDE SEQUENCE [GENOMIC DNA]</scope>
    <source>
        <strain>D273-10B/A1</strain>
    </source>
</reference>
<reference key="2">
    <citation type="journal article" date="1994" name="EMBO J.">
        <title>Complete DNA sequence of yeast chromosome II.</title>
        <authorList>
            <person name="Feldmann H."/>
            <person name="Aigle M."/>
            <person name="Aljinovic G."/>
            <person name="Andre B."/>
            <person name="Baclet M.C."/>
            <person name="Barthe C."/>
            <person name="Baur A."/>
            <person name="Becam A.-M."/>
            <person name="Biteau N."/>
            <person name="Boles E."/>
            <person name="Brandt T."/>
            <person name="Brendel M."/>
            <person name="Brueckner M."/>
            <person name="Bussereau F."/>
            <person name="Christiansen C."/>
            <person name="Contreras R."/>
            <person name="Crouzet M."/>
            <person name="Cziepluch C."/>
            <person name="Demolis N."/>
            <person name="Delaveau T."/>
            <person name="Doignon F."/>
            <person name="Domdey H."/>
            <person name="Duesterhus S."/>
            <person name="Dubois E."/>
            <person name="Dujon B."/>
            <person name="El Bakkoury M."/>
            <person name="Entian K.-D."/>
            <person name="Feuermann M."/>
            <person name="Fiers W."/>
            <person name="Fobo G.M."/>
            <person name="Fritz C."/>
            <person name="Gassenhuber J."/>
            <person name="Glansdorff N."/>
            <person name="Goffeau A."/>
            <person name="Grivell L.A."/>
            <person name="de Haan M."/>
            <person name="Hein C."/>
            <person name="Herbert C.J."/>
            <person name="Hollenberg C.P."/>
            <person name="Holmstroem K."/>
            <person name="Jacq C."/>
            <person name="Jacquet M."/>
            <person name="Jauniaux J.-C."/>
            <person name="Jonniaux J.-L."/>
            <person name="Kallesoee T."/>
            <person name="Kiesau P."/>
            <person name="Kirchrath L."/>
            <person name="Koetter P."/>
            <person name="Korol S."/>
            <person name="Liebl S."/>
            <person name="Logghe M."/>
            <person name="Lohan A.J.E."/>
            <person name="Louis E.J."/>
            <person name="Li Z.Y."/>
            <person name="Maat M.J."/>
            <person name="Mallet L."/>
            <person name="Mannhaupt G."/>
            <person name="Messenguy F."/>
            <person name="Miosga T."/>
            <person name="Molemans F."/>
            <person name="Mueller S."/>
            <person name="Nasr F."/>
            <person name="Obermaier B."/>
            <person name="Perea J."/>
            <person name="Pierard A."/>
            <person name="Piravandi E."/>
            <person name="Pohl F.M."/>
            <person name="Pohl T.M."/>
            <person name="Potier S."/>
            <person name="Proft M."/>
            <person name="Purnelle B."/>
            <person name="Ramezani Rad M."/>
            <person name="Rieger M."/>
            <person name="Rose M."/>
            <person name="Schaaff-Gerstenschlaeger I."/>
            <person name="Scherens B."/>
            <person name="Schwarzlose C."/>
            <person name="Skala J."/>
            <person name="Slonimski P.P."/>
            <person name="Smits P.H.M."/>
            <person name="Souciet J.-L."/>
            <person name="Steensma H.Y."/>
            <person name="Stucka R."/>
            <person name="Urrestarazu L.A."/>
            <person name="van der Aart Q.J.M."/>
            <person name="Van Dyck L."/>
            <person name="Vassarotti A."/>
            <person name="Vetter I."/>
            <person name="Vierendeels F."/>
            <person name="Vissers S."/>
            <person name="Wagner G."/>
            <person name="de Wergifosse P."/>
            <person name="Wolfe K.H."/>
            <person name="Zagulski M."/>
            <person name="Zimmermann F.K."/>
            <person name="Mewes H.-W."/>
            <person name="Kleine K."/>
        </authorList>
    </citation>
    <scope>NUCLEOTIDE SEQUENCE [LARGE SCALE GENOMIC DNA]</scope>
    <source>
        <strain>ATCC 204508 / S288c</strain>
    </source>
</reference>
<reference key="3">
    <citation type="journal article" date="2014" name="G3 (Bethesda)">
        <title>The reference genome sequence of Saccharomyces cerevisiae: Then and now.</title>
        <authorList>
            <person name="Engel S.R."/>
            <person name="Dietrich F.S."/>
            <person name="Fisk D.G."/>
            <person name="Binkley G."/>
            <person name="Balakrishnan R."/>
            <person name="Costanzo M.C."/>
            <person name="Dwight S.S."/>
            <person name="Hitz B.C."/>
            <person name="Karra K."/>
            <person name="Nash R.S."/>
            <person name="Weng S."/>
            <person name="Wong E.D."/>
            <person name="Lloyd P."/>
            <person name="Skrzypek M.S."/>
            <person name="Miyasato S.R."/>
            <person name="Simison M."/>
            <person name="Cherry J.M."/>
        </authorList>
    </citation>
    <scope>GENOME REANNOTATION</scope>
    <source>
        <strain>ATCC 204508 / S288c</strain>
    </source>
</reference>
<reference key="4">
    <citation type="journal article" date="2007" name="Genome Res.">
        <title>Approaching a complete repository of sequence-verified protein-encoding clones for Saccharomyces cerevisiae.</title>
        <authorList>
            <person name="Hu Y."/>
            <person name="Rolfs A."/>
            <person name="Bhullar B."/>
            <person name="Murthy T.V.S."/>
            <person name="Zhu C."/>
            <person name="Berger M.F."/>
            <person name="Camargo A.A."/>
            <person name="Kelley F."/>
            <person name="McCarron S."/>
            <person name="Jepson D."/>
            <person name="Richardson A."/>
            <person name="Raphael J."/>
            <person name="Moreira D."/>
            <person name="Taycher E."/>
            <person name="Zuo D."/>
            <person name="Mohr S."/>
            <person name="Kane M.F."/>
            <person name="Williamson J."/>
            <person name="Simpson A.J.G."/>
            <person name="Bulyk M.L."/>
            <person name="Harlow E."/>
            <person name="Marsischky G."/>
            <person name="Kolodner R.D."/>
            <person name="LaBaer J."/>
        </authorList>
    </citation>
    <scope>NUCLEOTIDE SEQUENCE [GENOMIC DNA]</scope>
    <source>
        <strain>ATCC 204508 / S288c</strain>
    </source>
</reference>
<reference key="5">
    <citation type="journal article" date="1994" name="Yeast">
        <title>Sequence around the centromere of Saccharomyces cerevisiae chromosome II: similarity of CEN2 to CEN4.</title>
        <authorList>
            <person name="Wolfe K.H."/>
            <person name="Lohan A.J.E."/>
        </authorList>
    </citation>
    <scope>NUCLEOTIDE SEQUENCE [GENOMIC DNA] OF 1-285</scope>
    <source>
        <strain>ATCC 204508 / S288c</strain>
    </source>
</reference>
<reference key="6">
    <citation type="journal article" date="2003" name="Nature">
        <title>Global analysis of protein expression in yeast.</title>
        <authorList>
            <person name="Ghaemmaghami S."/>
            <person name="Huh W.-K."/>
            <person name="Bower K."/>
            <person name="Howson R.W."/>
            <person name="Belle A."/>
            <person name="Dephoure N."/>
            <person name="O'Shea E.K."/>
            <person name="Weissman J.S."/>
        </authorList>
    </citation>
    <scope>LEVEL OF PROTEIN EXPRESSION [LARGE SCALE ANALYSIS]</scope>
</reference>
<comment type="function">
    <text>Assembly of polyisoprenoid side chains. The polyprenyl synthase of coenzyme Q biosynthesis catalyzes the formation from isopentenyl diphosphate of all trans-polyprenyl pyrophosphates generally ranging in length of between 6 and 10 isoprene units depending on the species.</text>
</comment>
<comment type="cofactor">
    <cofactor evidence="1">
        <name>Mg(2+)</name>
        <dbReference type="ChEBI" id="CHEBI:18420"/>
    </cofactor>
    <text evidence="1">Binds 2 Mg(2+) ions per subunit.</text>
</comment>
<comment type="pathway">
    <text>Cofactor biosynthesis; ubiquinone biosynthesis.</text>
</comment>
<comment type="interaction">
    <interactant intactId="EBI-4912">
        <id>P18900</id>
    </interactant>
    <interactant intactId="EBI-8603">
        <id>P10592</id>
        <label>SSA2</label>
    </interactant>
    <organismsDiffer>false</organismsDiffer>
    <experiments>2</experiments>
</comment>
<comment type="subcellular location">
    <subcellularLocation>
        <location>Mitochondrion inner membrane</location>
        <topology>Peripheral membrane protein</topology>
        <orientation>Matrix side</orientation>
    </subcellularLocation>
</comment>
<comment type="miscellaneous">
    <text evidence="5">Present with 1560 molecules/cell in log phase SD medium.</text>
</comment>
<comment type="similarity">
    <text evidence="6">Belongs to the FPP/GGPP synthase family.</text>
</comment>
<sequence>MFQRSGAAHHIKLISSRRCRFKSSFAVALNAASKLVTPKILWNNPISLVSKEMNTLAKNIVALIGSGHPVLNKVTSYYFETEGKKVRPLLVLLLSRALSEIPMTERNHLKIDKSDVPEDPIYSKPSQNQLFQRPASSISPLHILHGIKPLNPLTKGPEPLPEETFDKQRGILPKQRRLAEIVEMIHTASLLHDDVIDHSDTRRGRPSGNAAFTNKMAVLAGDFLLGRATVSISRLHNPEVVELMSNSIANLVEGEFMQLKNTSIDADIDTIENGHKLLPVPSKKLEVKEHDFRVPSRQQGLQLSHDQIIETAFEYYIHKTYLKTAALISKSCRCAAILSGASPAVIDECYDFGRNLGICFQLVDDMLDFTVSGKDLGKPSGADLKLGIATAPVLFAWKEDPSLGPLISRNFSERGDVEKTIDSVRLHNGIAKTKILAEEYRDKALQNLRDSLPESDARSALEFLTNSILTRRK</sequence>
<dbReference type="EC" id="2.5.1.-"/>
<dbReference type="EMBL" id="J05547">
    <property type="protein sequence ID" value="AAA34686.1"/>
    <property type="molecule type" value="Genomic_DNA"/>
</dbReference>
<dbReference type="EMBL" id="Z35872">
    <property type="protein sequence ID" value="CAA84939.1"/>
    <property type="molecule type" value="Genomic_DNA"/>
</dbReference>
<dbReference type="EMBL" id="AY558099">
    <property type="protein sequence ID" value="AAS56425.1"/>
    <property type="molecule type" value="Genomic_DNA"/>
</dbReference>
<dbReference type="EMBL" id="Z26494">
    <property type="protein sequence ID" value="CAA81272.1"/>
    <property type="molecule type" value="Genomic_DNA"/>
</dbReference>
<dbReference type="EMBL" id="BK006936">
    <property type="protein sequence ID" value="DAA07124.1"/>
    <property type="molecule type" value="Genomic_DNA"/>
</dbReference>
<dbReference type="PIR" id="A36625">
    <property type="entry name" value="XUBYTP"/>
</dbReference>
<dbReference type="RefSeq" id="NP_009557.1">
    <property type="nucleotide sequence ID" value="NM_001178351.1"/>
</dbReference>
<dbReference type="SMR" id="P18900"/>
<dbReference type="BioGRID" id="32704">
    <property type="interactions" value="57"/>
</dbReference>
<dbReference type="DIP" id="DIP-1103N"/>
<dbReference type="FunCoup" id="P18900">
    <property type="interactions" value="710"/>
</dbReference>
<dbReference type="IntAct" id="P18900">
    <property type="interactions" value="8"/>
</dbReference>
<dbReference type="MINT" id="P18900"/>
<dbReference type="STRING" id="4932.YBR003W"/>
<dbReference type="CarbonylDB" id="P18900"/>
<dbReference type="PaxDb" id="4932-YBR003W"/>
<dbReference type="PeptideAtlas" id="P18900"/>
<dbReference type="EnsemblFungi" id="YBR003W_mRNA">
    <property type="protein sequence ID" value="YBR003W"/>
    <property type="gene ID" value="YBR003W"/>
</dbReference>
<dbReference type="GeneID" id="852288"/>
<dbReference type="KEGG" id="sce:YBR003W"/>
<dbReference type="AGR" id="SGD:S000000207"/>
<dbReference type="SGD" id="S000000207">
    <property type="gene designation" value="COQ1"/>
</dbReference>
<dbReference type="VEuPathDB" id="FungiDB:YBR003W"/>
<dbReference type="eggNOG" id="KOG0776">
    <property type="taxonomic scope" value="Eukaryota"/>
</dbReference>
<dbReference type="GeneTree" id="ENSGT00940000153498"/>
<dbReference type="HOGENOM" id="CLU_014015_1_0_1"/>
<dbReference type="InParanoid" id="P18900"/>
<dbReference type="OMA" id="AFDYYLH"/>
<dbReference type="OrthoDB" id="9927103at2759"/>
<dbReference type="BioCyc" id="MetaCyc:YBR003W-MONOMER"/>
<dbReference type="BioCyc" id="YEAST:YBR003W-MONOMER"/>
<dbReference type="Reactome" id="R-SCE-2142789">
    <property type="pathway name" value="Ubiquinol biosynthesis"/>
</dbReference>
<dbReference type="UniPathway" id="UPA00232"/>
<dbReference type="BioGRID-ORCS" id="852288">
    <property type="hits" value="9 hits in 10 CRISPR screens"/>
</dbReference>
<dbReference type="PRO" id="PR:P18900"/>
<dbReference type="Proteomes" id="UP000002311">
    <property type="component" value="Chromosome II"/>
</dbReference>
<dbReference type="RNAct" id="P18900">
    <property type="molecule type" value="protein"/>
</dbReference>
<dbReference type="GO" id="GO:0031314">
    <property type="term" value="C:extrinsic component of mitochondrial inner membrane"/>
    <property type="evidence" value="ECO:0000314"/>
    <property type="project" value="WormBase"/>
</dbReference>
<dbReference type="GO" id="GO:0005739">
    <property type="term" value="C:mitochondrion"/>
    <property type="evidence" value="ECO:0000315"/>
    <property type="project" value="SGD"/>
</dbReference>
<dbReference type="GO" id="GO:0032476">
    <property type="term" value="C:polyprenyl diphosphate synthase complex"/>
    <property type="evidence" value="ECO:0000318"/>
    <property type="project" value="GO_Central"/>
</dbReference>
<dbReference type="GO" id="GO:0000010">
    <property type="term" value="F:heptaprenyl diphosphate synthase activity"/>
    <property type="evidence" value="ECO:0000315"/>
    <property type="project" value="SGD"/>
</dbReference>
<dbReference type="GO" id="GO:0046872">
    <property type="term" value="F:metal ion binding"/>
    <property type="evidence" value="ECO:0007669"/>
    <property type="project" value="UniProtKB-KW"/>
</dbReference>
<dbReference type="GO" id="GO:0004659">
    <property type="term" value="F:prenyltransferase activity"/>
    <property type="evidence" value="ECO:0000318"/>
    <property type="project" value="GO_Central"/>
</dbReference>
<dbReference type="GO" id="GO:0008299">
    <property type="term" value="P:isoprenoid biosynthetic process"/>
    <property type="evidence" value="ECO:0000318"/>
    <property type="project" value="GO_Central"/>
</dbReference>
<dbReference type="GO" id="GO:0006744">
    <property type="term" value="P:ubiquinone biosynthetic process"/>
    <property type="evidence" value="ECO:0000315"/>
    <property type="project" value="SGD"/>
</dbReference>
<dbReference type="CDD" id="cd00685">
    <property type="entry name" value="Trans_IPPS_HT"/>
    <property type="match status" value="1"/>
</dbReference>
<dbReference type="Gene3D" id="1.10.600.10">
    <property type="entry name" value="Farnesyl Diphosphate Synthase"/>
    <property type="match status" value="1"/>
</dbReference>
<dbReference type="InterPro" id="IPR008949">
    <property type="entry name" value="Isoprenoid_synthase_dom_sf"/>
</dbReference>
<dbReference type="InterPro" id="IPR000092">
    <property type="entry name" value="Polyprenyl_synt"/>
</dbReference>
<dbReference type="InterPro" id="IPR033749">
    <property type="entry name" value="Polyprenyl_synt_CS"/>
</dbReference>
<dbReference type="PANTHER" id="PTHR12001:SF69">
    <property type="entry name" value="ALL TRANS-POLYPRENYL-DIPHOSPHATE SYNTHASE PDSS1"/>
    <property type="match status" value="1"/>
</dbReference>
<dbReference type="PANTHER" id="PTHR12001">
    <property type="entry name" value="GERANYLGERANYL PYROPHOSPHATE SYNTHASE"/>
    <property type="match status" value="1"/>
</dbReference>
<dbReference type="Pfam" id="PF00348">
    <property type="entry name" value="polyprenyl_synt"/>
    <property type="match status" value="2"/>
</dbReference>
<dbReference type="SFLD" id="SFLDS00005">
    <property type="entry name" value="Isoprenoid_Synthase_Type_I"/>
    <property type="match status" value="1"/>
</dbReference>
<dbReference type="SUPFAM" id="SSF48576">
    <property type="entry name" value="Terpenoid synthases"/>
    <property type="match status" value="1"/>
</dbReference>
<dbReference type="PROSITE" id="PS00723">
    <property type="entry name" value="POLYPRENYL_SYNTHASE_1"/>
    <property type="match status" value="1"/>
</dbReference>
<dbReference type="PROSITE" id="PS00444">
    <property type="entry name" value="POLYPRENYL_SYNTHASE_2"/>
    <property type="match status" value="1"/>
</dbReference>
<gene>
    <name type="primary">COQ1</name>
    <name type="ordered locus">YBR003W</name>
    <name type="ORF">YBR0109</name>
</gene>